<gene>
    <name evidence="1" type="primary">vapC45</name>
    <name type="ordered locus">MT3271</name>
</gene>
<protein>
    <recommendedName>
        <fullName evidence="1">Ribonuclease VapC45</fullName>
        <shortName evidence="1">RNase VapC45</shortName>
        <ecNumber evidence="1">3.1.-.-</ecNumber>
    </recommendedName>
    <alternativeName>
        <fullName evidence="1">Toxin VapC45</fullName>
    </alternativeName>
</protein>
<comment type="function">
    <text evidence="1">Toxic component of a type II toxin-antitoxin (TA) system. An RNase. Its cognate antitoxin is VapB45 (By similarity).</text>
</comment>
<comment type="cofactor">
    <cofactor evidence="1">
        <name>Mg(2+)</name>
        <dbReference type="ChEBI" id="CHEBI:18420"/>
    </cofactor>
</comment>
<comment type="similarity">
    <text evidence="1">Belongs to the PINc/VapC protein family.</text>
</comment>
<name>VPC45_MYCTO</name>
<proteinExistence type="inferred from homology"/>
<feature type="chain" id="PRO_0000428600" description="Ribonuclease VapC45">
    <location>
        <begin position="1"/>
        <end position="144"/>
    </location>
</feature>
<feature type="binding site" evidence="1">
    <location>
        <position position="7"/>
    </location>
    <ligand>
        <name>Mg(2+)</name>
        <dbReference type="ChEBI" id="CHEBI:18420"/>
    </ligand>
</feature>
<feature type="binding site" evidence="1">
    <location>
        <position position="102"/>
    </location>
    <ligand>
        <name>Mg(2+)</name>
        <dbReference type="ChEBI" id="CHEBI:18420"/>
    </ligand>
</feature>
<organism>
    <name type="scientific">Mycobacterium tuberculosis (strain CDC 1551 / Oshkosh)</name>
    <dbReference type="NCBI Taxonomy" id="83331"/>
    <lineage>
        <taxon>Bacteria</taxon>
        <taxon>Bacillati</taxon>
        <taxon>Actinomycetota</taxon>
        <taxon>Actinomycetes</taxon>
        <taxon>Mycobacteriales</taxon>
        <taxon>Mycobacteriaceae</taxon>
        <taxon>Mycobacterium</taxon>
        <taxon>Mycobacterium tuberculosis complex</taxon>
    </lineage>
</organism>
<reference key="1">
    <citation type="journal article" date="2002" name="J. Bacteriol.">
        <title>Whole-genome comparison of Mycobacterium tuberculosis clinical and laboratory strains.</title>
        <authorList>
            <person name="Fleischmann R.D."/>
            <person name="Alland D."/>
            <person name="Eisen J.A."/>
            <person name="Carpenter L."/>
            <person name="White O."/>
            <person name="Peterson J.D."/>
            <person name="DeBoy R.T."/>
            <person name="Dodson R.J."/>
            <person name="Gwinn M.L."/>
            <person name="Haft D.H."/>
            <person name="Hickey E.K."/>
            <person name="Kolonay J.F."/>
            <person name="Nelson W.C."/>
            <person name="Umayam L.A."/>
            <person name="Ermolaeva M.D."/>
            <person name="Salzberg S.L."/>
            <person name="Delcher A."/>
            <person name="Utterback T.R."/>
            <person name="Weidman J.F."/>
            <person name="Khouri H.M."/>
            <person name="Gill J."/>
            <person name="Mikula A."/>
            <person name="Bishai W."/>
            <person name="Jacobs W.R. Jr."/>
            <person name="Venter J.C."/>
            <person name="Fraser C.M."/>
        </authorList>
    </citation>
    <scope>NUCLEOTIDE SEQUENCE [LARGE SCALE GENOMIC DNA]</scope>
    <source>
        <strain>CDC 1551 / Oshkosh</strain>
    </source>
</reference>
<keyword id="KW-0378">Hydrolase</keyword>
<keyword id="KW-0460">Magnesium</keyword>
<keyword id="KW-0479">Metal-binding</keyword>
<keyword id="KW-0540">Nuclease</keyword>
<keyword id="KW-1185">Reference proteome</keyword>
<keyword id="KW-1277">Toxin-antitoxin system</keyword>
<sequence length="144" mass="15205">MPLVYFDASAFVKLLTTETGSSLASALWDGCDAALSSRLAYPEVRAALAAAARNHDLTESELADAERDWEDFWAATRPVELTATVEQHAGHLARAHALRGADAVHLASALAVGDPGLVVAVWDRRLHTGAHAAGCRVAPAQLDP</sequence>
<accession>P9WF50</accession>
<accession>L0TDD5</accession>
<accession>O53330</accession>
<accession>Q7D5Z6</accession>
<evidence type="ECO:0000255" key="1">
    <source>
        <dbReference type="HAMAP-Rule" id="MF_00265"/>
    </source>
</evidence>
<dbReference type="EC" id="3.1.-.-" evidence="1"/>
<dbReference type="EMBL" id="AE000516">
    <property type="protein sequence ID" value="AAK47611.1"/>
    <property type="molecule type" value="Genomic_DNA"/>
</dbReference>
<dbReference type="PIR" id="B70949">
    <property type="entry name" value="B70949"/>
</dbReference>
<dbReference type="RefSeq" id="WP_003899952.1">
    <property type="nucleotide sequence ID" value="NZ_KK341227.1"/>
</dbReference>
<dbReference type="SMR" id="P9WF50"/>
<dbReference type="KEGG" id="mtc:MT3271"/>
<dbReference type="PATRIC" id="fig|83331.31.peg.3521"/>
<dbReference type="HOGENOM" id="CLU_119496_1_0_11"/>
<dbReference type="Proteomes" id="UP000001020">
    <property type="component" value="Chromosome"/>
</dbReference>
<dbReference type="GO" id="GO:0000287">
    <property type="term" value="F:magnesium ion binding"/>
    <property type="evidence" value="ECO:0007669"/>
    <property type="project" value="UniProtKB-UniRule"/>
</dbReference>
<dbReference type="GO" id="GO:0004540">
    <property type="term" value="F:RNA nuclease activity"/>
    <property type="evidence" value="ECO:0007669"/>
    <property type="project" value="InterPro"/>
</dbReference>
<dbReference type="CDD" id="cd09874">
    <property type="entry name" value="PIN_MT3492-like"/>
    <property type="match status" value="1"/>
</dbReference>
<dbReference type="Gene3D" id="3.40.50.1010">
    <property type="entry name" value="5'-nuclease"/>
    <property type="match status" value="1"/>
</dbReference>
<dbReference type="HAMAP" id="MF_00265">
    <property type="entry name" value="VapC_Nob1"/>
    <property type="match status" value="1"/>
</dbReference>
<dbReference type="InterPro" id="IPR029060">
    <property type="entry name" value="PIN-like_dom_sf"/>
</dbReference>
<dbReference type="InterPro" id="IPR002716">
    <property type="entry name" value="PIN_dom"/>
</dbReference>
<dbReference type="InterPro" id="IPR022907">
    <property type="entry name" value="VapC_family"/>
</dbReference>
<dbReference type="Pfam" id="PF01850">
    <property type="entry name" value="PIN"/>
    <property type="match status" value="1"/>
</dbReference>
<dbReference type="SUPFAM" id="SSF88723">
    <property type="entry name" value="PIN domain-like"/>
    <property type="match status" value="1"/>
</dbReference>